<accession>Q0CVU1</accession>
<reference key="1">
    <citation type="submission" date="2005-09" db="EMBL/GenBank/DDBJ databases">
        <title>Annotation of the Aspergillus terreus NIH2624 genome.</title>
        <authorList>
            <person name="Birren B.W."/>
            <person name="Lander E.S."/>
            <person name="Galagan J.E."/>
            <person name="Nusbaum C."/>
            <person name="Devon K."/>
            <person name="Henn M."/>
            <person name="Ma L.-J."/>
            <person name="Jaffe D.B."/>
            <person name="Butler J."/>
            <person name="Alvarez P."/>
            <person name="Gnerre S."/>
            <person name="Grabherr M."/>
            <person name="Kleber M."/>
            <person name="Mauceli E.W."/>
            <person name="Brockman W."/>
            <person name="Rounsley S."/>
            <person name="Young S.K."/>
            <person name="LaButti K."/>
            <person name="Pushparaj V."/>
            <person name="DeCaprio D."/>
            <person name="Crawford M."/>
            <person name="Koehrsen M."/>
            <person name="Engels R."/>
            <person name="Montgomery P."/>
            <person name="Pearson M."/>
            <person name="Howarth C."/>
            <person name="Larson L."/>
            <person name="Luoma S."/>
            <person name="White J."/>
            <person name="Alvarado L."/>
            <person name="Kodira C.D."/>
            <person name="Zeng Q."/>
            <person name="Oleary S."/>
            <person name="Yandava C."/>
            <person name="Denning D.W."/>
            <person name="Nierman W.C."/>
            <person name="Milne T."/>
            <person name="Madden K."/>
        </authorList>
    </citation>
    <scope>NUCLEOTIDE SEQUENCE [LARGE SCALE GENOMIC DNA]</scope>
    <source>
        <strain>NIH 2624 / FGSC A1156</strain>
    </source>
</reference>
<proteinExistence type="inferred from homology"/>
<evidence type="ECO:0000250" key="1"/>
<evidence type="ECO:0000255" key="2"/>
<evidence type="ECO:0000305" key="3"/>
<keyword id="KW-0119">Carbohydrate metabolism</keyword>
<keyword id="KW-0961">Cell wall biogenesis/degradation</keyword>
<keyword id="KW-1015">Disulfide bond</keyword>
<keyword id="KW-0325">Glycoprotein</keyword>
<keyword id="KW-0456">Lyase</keyword>
<keyword id="KW-0624">Polysaccharide degradation</keyword>
<keyword id="KW-1185">Reference proteome</keyword>
<keyword id="KW-0964">Secreted</keyword>
<keyword id="KW-0732">Signal</keyword>
<comment type="function">
    <text evidence="1">Pectinolytic enzymes consist of four classes of enzymes: pectin lyase, polygalacturonase, pectin methylesterase and rhamnogalacturonase. Degrades the rhamnogalacturonan I (RG-I) backbone of pectin (By similarity).</text>
</comment>
<comment type="catalytic activity">
    <reaction>
        <text>Endotype eliminative cleavage of L-alpha-rhamnopyranosyl-(1-&gt;4)-alpha-D-galactopyranosyluronic acid bonds of rhamnogalacturonan I domains in ramified hairy regions of pectin leaving L-rhamnopyranose at the reducing end and 4-deoxy-4,5-unsaturated D-galactopyranosyluronic acid at the non-reducing end.</text>
        <dbReference type="EC" id="4.2.2.23"/>
    </reaction>
</comment>
<comment type="subcellular location">
    <subcellularLocation>
        <location evidence="1">Secreted</location>
    </subcellularLocation>
</comment>
<comment type="similarity">
    <text evidence="3">Belongs to the polysaccharide lyase 4 family.</text>
</comment>
<comment type="sequence caution" evidence="3">
    <conflict type="erroneous gene model prediction">
        <sequence resource="EMBL-CDS" id="EAU37155"/>
    </conflict>
</comment>
<sequence length="531" mass="56793">MLSKALFFSSLPLWAKVASAAFGITTTDSSYTIDAGSPNPLKFTVSRSSCDITSINYYGSELQYQSKGSHIGSGLGSASVSAVQNGDYIKVTCDTDTLTHYFVVHSGDPIIHMATYITAEPSIGELRFIARLNSNLLPNEEPFGDVSTTAGGSAIEGSDVFLVNGQTRSKFYSSQRFIDDQRHCISGSAHRVCMILNQYESSSGGPFHRDINSNNGGDYNSLYWYMNSGHVQTESYRMGLHGPYSMYFSRSGTPGTNIDTSFFANLDIKGYVPASGRGTVTGKASGADSNFKWVVHWYNDAAQYWTYTASDGSFTSPAMKPGTYTMAYYQGEYRVAETSVTVSAGSSTTKNISGSVKTGTTIFKIGDWDGQPTGFLNADKQLRMHPSDSRMSSWGPVTYTVGSSSVGSFPMALFKSVNSPVTIKFTATSAQTGAATLRIGTTLSFAGGRPQATINSYTGPTPSAPTNLNSRGVTRGAYRGLGEVYDVSIPAGTIVAGTNTITINVISGSSGDDFLSPNFVSAYPFLTLMRC</sequence>
<protein>
    <recommendedName>
        <fullName>Probable rhamnogalacturonate lyase A</fullName>
        <ecNumber>4.2.2.23</ecNumber>
    </recommendedName>
</protein>
<feature type="signal peptide" evidence="2">
    <location>
        <begin position="1"/>
        <end position="20"/>
    </location>
</feature>
<feature type="chain" id="PRO_0000394370" description="Probable rhamnogalacturonate lyase A">
    <location>
        <begin position="21"/>
        <end position="531"/>
    </location>
</feature>
<feature type="glycosylation site" description="N-linked (GlcNAc...) asparagine" evidence="2">
    <location>
        <position position="351"/>
    </location>
</feature>
<feature type="disulfide bond" evidence="1">
    <location>
        <begin position="50"/>
        <end position="93"/>
    </location>
</feature>
<feature type="disulfide bond" evidence="1">
    <location>
        <begin position="184"/>
        <end position="193"/>
    </location>
</feature>
<name>RGLA_ASPTN</name>
<organism>
    <name type="scientific">Aspergillus terreus (strain NIH 2624 / FGSC A1156)</name>
    <dbReference type="NCBI Taxonomy" id="341663"/>
    <lineage>
        <taxon>Eukaryota</taxon>
        <taxon>Fungi</taxon>
        <taxon>Dikarya</taxon>
        <taxon>Ascomycota</taxon>
        <taxon>Pezizomycotina</taxon>
        <taxon>Eurotiomycetes</taxon>
        <taxon>Eurotiomycetidae</taxon>
        <taxon>Eurotiales</taxon>
        <taxon>Aspergillaceae</taxon>
        <taxon>Aspergillus</taxon>
        <taxon>Aspergillus subgen. Circumdati</taxon>
    </lineage>
</organism>
<gene>
    <name type="primary">rglA</name>
    <name type="ORF">ATEG_02193</name>
</gene>
<dbReference type="EC" id="4.2.2.23"/>
<dbReference type="EMBL" id="CH476596">
    <property type="protein sequence ID" value="EAU37155.1"/>
    <property type="status" value="ALT_SEQ"/>
    <property type="molecule type" value="Genomic_DNA"/>
</dbReference>
<dbReference type="RefSeq" id="XP_001211371.1">
    <property type="nucleotide sequence ID" value="XM_001211371.1"/>
</dbReference>
<dbReference type="SMR" id="Q0CVU1"/>
<dbReference type="STRING" id="341663.Q0CVU1"/>
<dbReference type="GlyCosmos" id="Q0CVU1">
    <property type="glycosylation" value="1 site, No reported glycans"/>
</dbReference>
<dbReference type="GeneID" id="4316943"/>
<dbReference type="eggNOG" id="ENOG502QTKY">
    <property type="taxonomic scope" value="Eukaryota"/>
</dbReference>
<dbReference type="OrthoDB" id="114708at2759"/>
<dbReference type="Proteomes" id="UP000007963">
    <property type="component" value="Unassembled WGS sequence"/>
</dbReference>
<dbReference type="GO" id="GO:0005576">
    <property type="term" value="C:extracellular region"/>
    <property type="evidence" value="ECO:0007669"/>
    <property type="project" value="UniProtKB-SubCell"/>
</dbReference>
<dbReference type="GO" id="GO:0030246">
    <property type="term" value="F:carbohydrate binding"/>
    <property type="evidence" value="ECO:0007669"/>
    <property type="project" value="InterPro"/>
</dbReference>
<dbReference type="GO" id="GO:0102210">
    <property type="term" value="F:rhamnogalacturonan endolyase activity"/>
    <property type="evidence" value="ECO:0007669"/>
    <property type="project" value="UniProtKB-EC"/>
</dbReference>
<dbReference type="GO" id="GO:0071555">
    <property type="term" value="P:cell wall organization"/>
    <property type="evidence" value="ECO:0007669"/>
    <property type="project" value="UniProtKB-KW"/>
</dbReference>
<dbReference type="GO" id="GO:0045490">
    <property type="term" value="P:pectin catabolic process"/>
    <property type="evidence" value="ECO:0007669"/>
    <property type="project" value="TreeGrafter"/>
</dbReference>
<dbReference type="CDD" id="cd10317">
    <property type="entry name" value="RGL4_C"/>
    <property type="match status" value="1"/>
</dbReference>
<dbReference type="CDD" id="cd10316">
    <property type="entry name" value="RGL4_M"/>
    <property type="match status" value="1"/>
</dbReference>
<dbReference type="CDD" id="cd10320">
    <property type="entry name" value="RGL4_N"/>
    <property type="match status" value="1"/>
</dbReference>
<dbReference type="FunFam" id="2.60.120.260:FF:000102">
    <property type="entry name" value="Rhamnogalacturonate lyase A"/>
    <property type="match status" value="1"/>
</dbReference>
<dbReference type="FunFam" id="2.60.40.1120:FF:000017">
    <property type="entry name" value="Rhamnogalacturonate lyase A"/>
    <property type="match status" value="1"/>
</dbReference>
<dbReference type="FunFam" id="2.70.98.10:FF:000020">
    <property type="entry name" value="Rhamnogalacturonate lyase A"/>
    <property type="match status" value="1"/>
</dbReference>
<dbReference type="Gene3D" id="2.70.98.10">
    <property type="match status" value="1"/>
</dbReference>
<dbReference type="Gene3D" id="2.60.40.1120">
    <property type="entry name" value="Carboxypeptidase-like, regulatory domain"/>
    <property type="match status" value="1"/>
</dbReference>
<dbReference type="Gene3D" id="2.60.120.260">
    <property type="entry name" value="Galactose-binding domain-like"/>
    <property type="match status" value="1"/>
</dbReference>
<dbReference type="InterPro" id="IPR013784">
    <property type="entry name" value="Carb-bd-like_fold"/>
</dbReference>
<dbReference type="InterPro" id="IPR011013">
    <property type="entry name" value="Gal_mutarotase_sf_dom"/>
</dbReference>
<dbReference type="InterPro" id="IPR008979">
    <property type="entry name" value="Galactose-bd-like_sf"/>
</dbReference>
<dbReference type="InterPro" id="IPR014718">
    <property type="entry name" value="GH-type_carb-bd"/>
</dbReference>
<dbReference type="InterPro" id="IPR029413">
    <property type="entry name" value="RG-lyase_II"/>
</dbReference>
<dbReference type="InterPro" id="IPR029411">
    <property type="entry name" value="RG-lyase_III"/>
</dbReference>
<dbReference type="InterPro" id="IPR016590">
    <property type="entry name" value="Rhamnogalacturonase_B"/>
</dbReference>
<dbReference type="InterPro" id="IPR015364">
    <property type="entry name" value="RhgB_N"/>
</dbReference>
<dbReference type="PANTHER" id="PTHR36574">
    <property type="entry name" value="RHAMNOGALACTURONATE LYASE-RELATED"/>
    <property type="match status" value="1"/>
</dbReference>
<dbReference type="PANTHER" id="PTHR36574:SF1">
    <property type="entry name" value="RHAMNOGALACTURONATE LYASE-RELATED"/>
    <property type="match status" value="1"/>
</dbReference>
<dbReference type="Pfam" id="PF14683">
    <property type="entry name" value="CBM-like"/>
    <property type="match status" value="1"/>
</dbReference>
<dbReference type="Pfam" id="PF14686">
    <property type="entry name" value="fn3_3"/>
    <property type="match status" value="1"/>
</dbReference>
<dbReference type="Pfam" id="PF09284">
    <property type="entry name" value="RhgB_N"/>
    <property type="match status" value="1"/>
</dbReference>
<dbReference type="PIRSF" id="PIRSF011794">
    <property type="entry name" value="Rhamnogalacturonase_B"/>
    <property type="match status" value="1"/>
</dbReference>
<dbReference type="SUPFAM" id="SSF74650">
    <property type="entry name" value="Galactose mutarotase-like"/>
    <property type="match status" value="1"/>
</dbReference>
<dbReference type="SUPFAM" id="SSF49785">
    <property type="entry name" value="Galactose-binding domain-like"/>
    <property type="match status" value="1"/>
</dbReference>
<dbReference type="SUPFAM" id="SSF49452">
    <property type="entry name" value="Starch-binding domain-like"/>
    <property type="match status" value="1"/>
</dbReference>